<feature type="chain" id="PRO_0000131095" description="Large ribosomal subunit protein uL6m">
    <location>
        <begin position="1"/>
        <end position="170"/>
    </location>
</feature>
<sequence length="170" mass="19083">MKYSQNKSLNTFEIEYKIANKSVKIKSSGKMGVITKELKLKEPAIQSNNIYYLKNHGDSRIIIGTMKQQIQGVLAGFCIELKLVGLGFVVHKVGNTLVLDVGYSHYRSCLIPKEVVVKLEGSQIILYSINKEKVTTFASLLKTFKKINMYKGTGILGINEKIKLKKGKVR</sequence>
<dbReference type="EMBL" id="D63523">
    <property type="protein sequence ID" value="BAA23574.1"/>
    <property type="molecule type" value="Genomic_DNA"/>
</dbReference>
<dbReference type="EMBL" id="AB000109">
    <property type="protein sequence ID" value="BAA78082.1"/>
    <property type="molecule type" value="Genomic_DNA"/>
</dbReference>
<dbReference type="PIR" id="T43779">
    <property type="entry name" value="T43779"/>
</dbReference>
<dbReference type="RefSeq" id="NP_050100.1">
    <property type="nucleotide sequence ID" value="NC_000895.1"/>
</dbReference>
<dbReference type="SMR" id="O21037"/>
<dbReference type="FunCoup" id="O21037">
    <property type="interactions" value="28"/>
</dbReference>
<dbReference type="STRING" id="44689.O21037"/>
<dbReference type="GeneID" id="2193925"/>
<dbReference type="KEGG" id="ddi:DidioMp33"/>
<dbReference type="dictyBase" id="DDB_G0294038">
    <property type="gene designation" value="mrpl6"/>
</dbReference>
<dbReference type="VEuPathDB" id="AmoebaDB:DidioMp33"/>
<dbReference type="InParanoid" id="O21037"/>
<dbReference type="PhylomeDB" id="O21037"/>
<dbReference type="PRO" id="PR:O21037"/>
<dbReference type="Proteomes" id="UP000002195">
    <property type="component" value="Mitochondrion"/>
</dbReference>
<dbReference type="GO" id="GO:0005762">
    <property type="term" value="C:mitochondrial large ribosomal subunit"/>
    <property type="evidence" value="ECO:0000318"/>
    <property type="project" value="GO_Central"/>
</dbReference>
<dbReference type="GO" id="GO:0019843">
    <property type="term" value="F:rRNA binding"/>
    <property type="evidence" value="ECO:0007669"/>
    <property type="project" value="InterPro"/>
</dbReference>
<dbReference type="GO" id="GO:0003735">
    <property type="term" value="F:structural constituent of ribosome"/>
    <property type="evidence" value="ECO:0000318"/>
    <property type="project" value="GO_Central"/>
</dbReference>
<dbReference type="GO" id="GO:0006412">
    <property type="term" value="P:translation"/>
    <property type="evidence" value="ECO:0007669"/>
    <property type="project" value="InterPro"/>
</dbReference>
<dbReference type="Gene3D" id="3.90.930.12">
    <property type="entry name" value="Ribosomal protein L6, alpha-beta domain"/>
    <property type="match status" value="1"/>
</dbReference>
<dbReference type="InterPro" id="IPR000702">
    <property type="entry name" value="Ribosomal_uL6-like"/>
</dbReference>
<dbReference type="InterPro" id="IPR036789">
    <property type="entry name" value="Ribosomal_uL6-like_a/b-dom_sf"/>
</dbReference>
<dbReference type="InterPro" id="IPR020040">
    <property type="entry name" value="Ribosomal_uL6_a/b-dom"/>
</dbReference>
<dbReference type="InterPro" id="IPR019906">
    <property type="entry name" value="Ribosomal_uL6_bac-type"/>
</dbReference>
<dbReference type="PANTHER" id="PTHR11655">
    <property type="entry name" value="60S/50S RIBOSOMAL PROTEIN L6/L9"/>
    <property type="match status" value="1"/>
</dbReference>
<dbReference type="PANTHER" id="PTHR11655:SF14">
    <property type="entry name" value="LARGE RIBOSOMAL SUBUNIT PROTEIN UL6M"/>
    <property type="match status" value="1"/>
</dbReference>
<dbReference type="Pfam" id="PF00347">
    <property type="entry name" value="Ribosomal_L6"/>
    <property type="match status" value="1"/>
</dbReference>
<dbReference type="PIRSF" id="PIRSF002162">
    <property type="entry name" value="Ribosomal_L6"/>
    <property type="match status" value="1"/>
</dbReference>
<dbReference type="PRINTS" id="PR00059">
    <property type="entry name" value="RIBOSOMALL6"/>
</dbReference>
<dbReference type="SUPFAM" id="SSF56053">
    <property type="entry name" value="Ribosomal protein L6"/>
    <property type="match status" value="1"/>
</dbReference>
<organism>
    <name type="scientific">Dictyostelium discoideum</name>
    <name type="common">Social amoeba</name>
    <dbReference type="NCBI Taxonomy" id="44689"/>
    <lineage>
        <taxon>Eukaryota</taxon>
        <taxon>Amoebozoa</taxon>
        <taxon>Evosea</taxon>
        <taxon>Eumycetozoa</taxon>
        <taxon>Dictyostelia</taxon>
        <taxon>Dictyosteliales</taxon>
        <taxon>Dictyosteliaceae</taxon>
        <taxon>Dictyostelium</taxon>
    </lineage>
</organism>
<keyword id="KW-0496">Mitochondrion</keyword>
<keyword id="KW-1185">Reference proteome</keyword>
<keyword id="KW-0687">Ribonucleoprotein</keyword>
<keyword id="KW-0689">Ribosomal protein</keyword>
<gene>
    <name type="primary">mrpl6</name>
    <name type="synonym">rpl6</name>
    <name type="ORF">DDB_G0294038</name>
</gene>
<name>RM06_DICDI</name>
<proteinExistence type="inferred from homology"/>
<reference key="1">
    <citation type="journal article" date="1998" name="Curr. Genet.">
        <title>A ribosomal protein gene cluster is encoded in the mitochondrial DNA of Dictyostelium discoideum: UGA termination codons and similarity of gene order to Acanthamoeba castellanii.</title>
        <authorList>
            <person name="Iwamoto M."/>
            <person name="Pi M."/>
            <person name="Kurihara M."/>
            <person name="Morio T."/>
            <person name="Tanaka Y."/>
        </authorList>
    </citation>
    <scope>NUCLEOTIDE SEQUENCE [GENOMIC DNA]</scope>
    <source>
        <strain>AX3</strain>
    </source>
</reference>
<reference key="2">
    <citation type="journal article" date="2000" name="Mol. Gen. Genet.">
        <title>The mitochondrial DNA of Dictyostelium discoideum: complete sequence, gene content and genome organization.</title>
        <authorList>
            <person name="Ogawa S."/>
            <person name="Yoshino R."/>
            <person name="Angata K."/>
            <person name="Iwamoto M."/>
            <person name="Pi M."/>
            <person name="Kuroe K."/>
            <person name="Matsuo K."/>
            <person name="Morio T."/>
            <person name="Urushihara H."/>
            <person name="Yanagisawa K."/>
            <person name="Tanaka Y."/>
        </authorList>
    </citation>
    <scope>NUCLEOTIDE SEQUENCE [LARGE SCALE GENOMIC DNA]</scope>
    <source>
        <strain>AX3</strain>
    </source>
</reference>
<accession>O21037</accession>
<protein>
    <recommendedName>
        <fullName evidence="1">Large ribosomal subunit protein uL6m</fullName>
    </recommendedName>
    <alternativeName>
        <fullName>60S ribosomal protein L6, mitochondrial</fullName>
    </alternativeName>
</protein>
<geneLocation type="mitochondrion"/>
<comment type="subcellular location">
    <subcellularLocation>
        <location>Mitochondrion</location>
    </subcellularLocation>
</comment>
<comment type="similarity">
    <text evidence="1">Belongs to the universal ribosomal protein uL6 family.</text>
</comment>
<evidence type="ECO:0000305" key="1"/>